<proteinExistence type="inferred from homology"/>
<feature type="chain" id="PRO_0000175372" description="DNA-directed RNA polymerase subunit alpha">
    <location>
        <begin position="1"/>
        <end position="329"/>
    </location>
</feature>
<feature type="region of interest" description="Alpha N-terminal domain (alpha-NTD)" evidence="1">
    <location>
        <begin position="1"/>
        <end position="235"/>
    </location>
</feature>
<feature type="region of interest" description="Alpha C-terminal domain (alpha-CTD)" evidence="1">
    <location>
        <begin position="249"/>
        <end position="329"/>
    </location>
</feature>
<sequence>MQGSVTEFLKPRLVDIEQVSSTHAKVTLEPLERGFGHTLGNALRRILLSSMPGCAVTEVEIDGVLHEYSTKEGVQEDILEILLNLKGLAVRVQGKDEVILTLNKSGIGPVTAADITHDGDVEIVKPQHVICHLTDENASISMRIKVQRGRGYVPASTRIHSEEDERPIGRLLVDACYSPVERIAYNVEAARVEQRTDLDKLVIEMETNGTIDPEEAIRRAATILAEQLEAFVDLRDVRQPEVKEEKPEFDPILLRPVDDLELTVRSANCLKAEAIHYIGDLVQRTEVELLKTPNLGKKSLTEIKDVLASRGLSLGMRLENWPPASIADE</sequence>
<dbReference type="EC" id="2.7.7.6"/>
<dbReference type="EMBL" id="AL513382">
    <property type="protein sequence ID" value="CAD09171.1"/>
    <property type="molecule type" value="Genomic_DNA"/>
</dbReference>
<dbReference type="EMBL" id="AE014613">
    <property type="protein sequence ID" value="AAO71557.1"/>
    <property type="molecule type" value="Genomic_DNA"/>
</dbReference>
<dbReference type="RefSeq" id="NP_458485.1">
    <property type="nucleotide sequence ID" value="NC_003198.1"/>
</dbReference>
<dbReference type="RefSeq" id="WP_001162094.1">
    <property type="nucleotide sequence ID" value="NZ_WSUR01000046.1"/>
</dbReference>
<dbReference type="SMR" id="P0A7Z8"/>
<dbReference type="STRING" id="220341.gene:17588211"/>
<dbReference type="GeneID" id="93778692"/>
<dbReference type="KEGG" id="stt:t4090"/>
<dbReference type="KEGG" id="sty:STY4383"/>
<dbReference type="PATRIC" id="fig|220341.7.peg.4479"/>
<dbReference type="eggNOG" id="COG0202">
    <property type="taxonomic scope" value="Bacteria"/>
</dbReference>
<dbReference type="HOGENOM" id="CLU_053084_0_0_6"/>
<dbReference type="OMA" id="PIKNVKY"/>
<dbReference type="OrthoDB" id="9805706at2"/>
<dbReference type="Proteomes" id="UP000000541">
    <property type="component" value="Chromosome"/>
</dbReference>
<dbReference type="Proteomes" id="UP000002670">
    <property type="component" value="Chromosome"/>
</dbReference>
<dbReference type="GO" id="GO:0005737">
    <property type="term" value="C:cytoplasm"/>
    <property type="evidence" value="ECO:0007669"/>
    <property type="project" value="UniProtKB-ARBA"/>
</dbReference>
<dbReference type="GO" id="GO:0000428">
    <property type="term" value="C:DNA-directed RNA polymerase complex"/>
    <property type="evidence" value="ECO:0007669"/>
    <property type="project" value="UniProtKB-KW"/>
</dbReference>
<dbReference type="GO" id="GO:0003677">
    <property type="term" value="F:DNA binding"/>
    <property type="evidence" value="ECO:0007669"/>
    <property type="project" value="UniProtKB-UniRule"/>
</dbReference>
<dbReference type="GO" id="GO:0003899">
    <property type="term" value="F:DNA-directed RNA polymerase activity"/>
    <property type="evidence" value="ECO:0007669"/>
    <property type="project" value="UniProtKB-UniRule"/>
</dbReference>
<dbReference type="GO" id="GO:0046983">
    <property type="term" value="F:protein dimerization activity"/>
    <property type="evidence" value="ECO:0007669"/>
    <property type="project" value="InterPro"/>
</dbReference>
<dbReference type="GO" id="GO:0006351">
    <property type="term" value="P:DNA-templated transcription"/>
    <property type="evidence" value="ECO:0007669"/>
    <property type="project" value="UniProtKB-UniRule"/>
</dbReference>
<dbReference type="CDD" id="cd06928">
    <property type="entry name" value="RNAP_alpha_NTD"/>
    <property type="match status" value="1"/>
</dbReference>
<dbReference type="FunFam" id="1.10.150.20:FF:000001">
    <property type="entry name" value="DNA-directed RNA polymerase subunit alpha"/>
    <property type="match status" value="1"/>
</dbReference>
<dbReference type="FunFam" id="2.170.120.12:FF:000001">
    <property type="entry name" value="DNA-directed RNA polymerase subunit alpha"/>
    <property type="match status" value="1"/>
</dbReference>
<dbReference type="Gene3D" id="1.10.150.20">
    <property type="entry name" value="5' to 3' exonuclease, C-terminal subdomain"/>
    <property type="match status" value="1"/>
</dbReference>
<dbReference type="Gene3D" id="2.170.120.12">
    <property type="entry name" value="DNA-directed RNA polymerase, insert domain"/>
    <property type="match status" value="1"/>
</dbReference>
<dbReference type="Gene3D" id="3.30.1360.10">
    <property type="entry name" value="RNA polymerase, RBP11-like subunit"/>
    <property type="match status" value="1"/>
</dbReference>
<dbReference type="HAMAP" id="MF_00059">
    <property type="entry name" value="RNApol_bact_RpoA"/>
    <property type="match status" value="1"/>
</dbReference>
<dbReference type="InterPro" id="IPR011262">
    <property type="entry name" value="DNA-dir_RNA_pol_insert"/>
</dbReference>
<dbReference type="InterPro" id="IPR011263">
    <property type="entry name" value="DNA-dir_RNA_pol_RpoA/D/Rpb3"/>
</dbReference>
<dbReference type="InterPro" id="IPR011773">
    <property type="entry name" value="DNA-dir_RpoA"/>
</dbReference>
<dbReference type="InterPro" id="IPR036603">
    <property type="entry name" value="RBP11-like"/>
</dbReference>
<dbReference type="InterPro" id="IPR011260">
    <property type="entry name" value="RNAP_asu_C"/>
</dbReference>
<dbReference type="InterPro" id="IPR036643">
    <property type="entry name" value="RNApol_insert_sf"/>
</dbReference>
<dbReference type="NCBIfam" id="NF003513">
    <property type="entry name" value="PRK05182.1-2"/>
    <property type="match status" value="1"/>
</dbReference>
<dbReference type="NCBIfam" id="NF003519">
    <property type="entry name" value="PRK05182.2-5"/>
    <property type="match status" value="1"/>
</dbReference>
<dbReference type="NCBIfam" id="TIGR02027">
    <property type="entry name" value="rpoA"/>
    <property type="match status" value="1"/>
</dbReference>
<dbReference type="Pfam" id="PF01000">
    <property type="entry name" value="RNA_pol_A_bac"/>
    <property type="match status" value="1"/>
</dbReference>
<dbReference type="Pfam" id="PF03118">
    <property type="entry name" value="RNA_pol_A_CTD"/>
    <property type="match status" value="1"/>
</dbReference>
<dbReference type="Pfam" id="PF01193">
    <property type="entry name" value="RNA_pol_L"/>
    <property type="match status" value="1"/>
</dbReference>
<dbReference type="SMART" id="SM00662">
    <property type="entry name" value="RPOLD"/>
    <property type="match status" value="1"/>
</dbReference>
<dbReference type="SUPFAM" id="SSF47789">
    <property type="entry name" value="C-terminal domain of RNA polymerase alpha subunit"/>
    <property type="match status" value="1"/>
</dbReference>
<dbReference type="SUPFAM" id="SSF56553">
    <property type="entry name" value="Insert subdomain of RNA polymerase alpha subunit"/>
    <property type="match status" value="1"/>
</dbReference>
<dbReference type="SUPFAM" id="SSF55257">
    <property type="entry name" value="RBP11-like subunits of RNA polymerase"/>
    <property type="match status" value="1"/>
</dbReference>
<reference key="1">
    <citation type="journal article" date="2001" name="Nature">
        <title>Complete genome sequence of a multiple drug resistant Salmonella enterica serovar Typhi CT18.</title>
        <authorList>
            <person name="Parkhill J."/>
            <person name="Dougan G."/>
            <person name="James K.D."/>
            <person name="Thomson N.R."/>
            <person name="Pickard D."/>
            <person name="Wain J."/>
            <person name="Churcher C.M."/>
            <person name="Mungall K.L."/>
            <person name="Bentley S.D."/>
            <person name="Holden M.T.G."/>
            <person name="Sebaihia M."/>
            <person name="Baker S."/>
            <person name="Basham D."/>
            <person name="Brooks K."/>
            <person name="Chillingworth T."/>
            <person name="Connerton P."/>
            <person name="Cronin A."/>
            <person name="Davis P."/>
            <person name="Davies R.M."/>
            <person name="Dowd L."/>
            <person name="White N."/>
            <person name="Farrar J."/>
            <person name="Feltwell T."/>
            <person name="Hamlin N."/>
            <person name="Haque A."/>
            <person name="Hien T.T."/>
            <person name="Holroyd S."/>
            <person name="Jagels K."/>
            <person name="Krogh A."/>
            <person name="Larsen T.S."/>
            <person name="Leather S."/>
            <person name="Moule S."/>
            <person name="O'Gaora P."/>
            <person name="Parry C."/>
            <person name="Quail M.A."/>
            <person name="Rutherford K.M."/>
            <person name="Simmonds M."/>
            <person name="Skelton J."/>
            <person name="Stevens K."/>
            <person name="Whitehead S."/>
            <person name="Barrell B.G."/>
        </authorList>
    </citation>
    <scope>NUCLEOTIDE SEQUENCE [LARGE SCALE GENOMIC DNA]</scope>
    <source>
        <strain>CT18</strain>
    </source>
</reference>
<reference key="2">
    <citation type="journal article" date="2003" name="J. Bacteriol.">
        <title>Comparative genomics of Salmonella enterica serovar Typhi strains Ty2 and CT18.</title>
        <authorList>
            <person name="Deng W."/>
            <person name="Liou S.-R."/>
            <person name="Plunkett G. III"/>
            <person name="Mayhew G.F."/>
            <person name="Rose D.J."/>
            <person name="Burland V."/>
            <person name="Kodoyianni V."/>
            <person name="Schwartz D.C."/>
            <person name="Blattner F.R."/>
        </authorList>
    </citation>
    <scope>NUCLEOTIDE SEQUENCE [LARGE SCALE GENOMIC DNA]</scope>
    <source>
        <strain>ATCC 700931 / Ty2</strain>
    </source>
</reference>
<evidence type="ECO:0000250" key="1"/>
<evidence type="ECO:0000305" key="2"/>
<keyword id="KW-0240">DNA-directed RNA polymerase</keyword>
<keyword id="KW-0548">Nucleotidyltransferase</keyword>
<keyword id="KW-0804">Transcription</keyword>
<keyword id="KW-0808">Transferase</keyword>
<gene>
    <name type="primary">rpoA</name>
    <name type="synonym">pez</name>
    <name type="synonym">phs</name>
    <name type="synonym">sez</name>
    <name type="ordered locus">STY4383</name>
    <name type="ordered locus">t4090</name>
</gene>
<accession>P0A7Z8</accession>
<accession>P00574</accession>
<name>RPOA_SALTI</name>
<comment type="function">
    <text evidence="1">DNA-dependent RNA polymerase catalyzes the transcription of DNA into RNA using the four ribonucleoside triphosphates as substrates.</text>
</comment>
<comment type="catalytic activity">
    <reaction>
        <text>RNA(n) + a ribonucleoside 5'-triphosphate = RNA(n+1) + diphosphate</text>
        <dbReference type="Rhea" id="RHEA:21248"/>
        <dbReference type="Rhea" id="RHEA-COMP:14527"/>
        <dbReference type="Rhea" id="RHEA-COMP:17342"/>
        <dbReference type="ChEBI" id="CHEBI:33019"/>
        <dbReference type="ChEBI" id="CHEBI:61557"/>
        <dbReference type="ChEBI" id="CHEBI:140395"/>
        <dbReference type="EC" id="2.7.7.6"/>
    </reaction>
</comment>
<comment type="subunit">
    <text evidence="1">Homodimer. The RNAP catalytic core consists of 2 alpha, 1 beta, 1 beta' and 1 omega subunit. When a sigma factor is associated with the core the holoenzyme is formed, which can initiate transcription (By similarity).</text>
</comment>
<comment type="domain">
    <text evidence="1">The N-terminal domain is essential for RNAP assembly and basal transcription, whereas the C-terminal domain is involved in interaction with transcriptional regulators and with upstream promoter elements.</text>
</comment>
<comment type="similarity">
    <text evidence="2">Belongs to the RNA polymerase alpha chain family.</text>
</comment>
<organism>
    <name type="scientific">Salmonella typhi</name>
    <dbReference type="NCBI Taxonomy" id="90370"/>
    <lineage>
        <taxon>Bacteria</taxon>
        <taxon>Pseudomonadati</taxon>
        <taxon>Pseudomonadota</taxon>
        <taxon>Gammaproteobacteria</taxon>
        <taxon>Enterobacterales</taxon>
        <taxon>Enterobacteriaceae</taxon>
        <taxon>Salmonella</taxon>
    </lineage>
</organism>
<protein>
    <recommendedName>
        <fullName>DNA-directed RNA polymerase subunit alpha</fullName>
        <shortName>RNAP subunit alpha</shortName>
        <ecNumber>2.7.7.6</ecNumber>
    </recommendedName>
    <alternativeName>
        <fullName>RNA polymerase subunit alpha</fullName>
    </alternativeName>
    <alternativeName>
        <fullName>Transcriptase subunit alpha</fullName>
    </alternativeName>
</protein>